<dbReference type="EC" id="4.6.1.17" evidence="1"/>
<dbReference type="EMBL" id="CP000264">
    <property type="protein sequence ID" value="ABD54793.1"/>
    <property type="molecule type" value="Genomic_DNA"/>
</dbReference>
<dbReference type="RefSeq" id="WP_011454998.1">
    <property type="nucleotide sequence ID" value="NC_007802.1"/>
</dbReference>
<dbReference type="SMR" id="Q28R69"/>
<dbReference type="STRING" id="290400.Jann_1876"/>
<dbReference type="KEGG" id="jan:Jann_1876"/>
<dbReference type="eggNOG" id="COG0315">
    <property type="taxonomic scope" value="Bacteria"/>
</dbReference>
<dbReference type="HOGENOM" id="CLU_074693_1_1_5"/>
<dbReference type="OrthoDB" id="9794429at2"/>
<dbReference type="UniPathway" id="UPA00344"/>
<dbReference type="Proteomes" id="UP000008326">
    <property type="component" value="Chromosome"/>
</dbReference>
<dbReference type="GO" id="GO:0061799">
    <property type="term" value="F:cyclic pyranopterin monophosphate synthase activity"/>
    <property type="evidence" value="ECO:0007669"/>
    <property type="project" value="UniProtKB-UniRule"/>
</dbReference>
<dbReference type="GO" id="GO:0006777">
    <property type="term" value="P:Mo-molybdopterin cofactor biosynthetic process"/>
    <property type="evidence" value="ECO:0007669"/>
    <property type="project" value="UniProtKB-UniRule"/>
</dbReference>
<dbReference type="CDD" id="cd01420">
    <property type="entry name" value="MoaC_PE"/>
    <property type="match status" value="1"/>
</dbReference>
<dbReference type="Gene3D" id="3.30.70.640">
    <property type="entry name" value="Molybdopterin cofactor biosynthesis C (MoaC) domain"/>
    <property type="match status" value="1"/>
</dbReference>
<dbReference type="HAMAP" id="MF_01224_B">
    <property type="entry name" value="MoaC_B"/>
    <property type="match status" value="1"/>
</dbReference>
<dbReference type="InterPro" id="IPR023045">
    <property type="entry name" value="MoaC"/>
</dbReference>
<dbReference type="InterPro" id="IPR047594">
    <property type="entry name" value="MoaC_bact/euk"/>
</dbReference>
<dbReference type="InterPro" id="IPR036522">
    <property type="entry name" value="MoaC_sf"/>
</dbReference>
<dbReference type="InterPro" id="IPR050105">
    <property type="entry name" value="MoCo_biosynth_MoaA/MoaC"/>
</dbReference>
<dbReference type="InterPro" id="IPR002820">
    <property type="entry name" value="Mopterin_CF_biosynth-C_dom"/>
</dbReference>
<dbReference type="NCBIfam" id="TIGR00581">
    <property type="entry name" value="moaC"/>
    <property type="match status" value="1"/>
</dbReference>
<dbReference type="NCBIfam" id="NF006870">
    <property type="entry name" value="PRK09364.1"/>
    <property type="match status" value="1"/>
</dbReference>
<dbReference type="PANTHER" id="PTHR22960:SF29">
    <property type="entry name" value="CYCLIC PYRANOPTERIN MONOPHOSPHATE SYNTHASE"/>
    <property type="match status" value="1"/>
</dbReference>
<dbReference type="PANTHER" id="PTHR22960">
    <property type="entry name" value="MOLYBDOPTERIN COFACTOR SYNTHESIS PROTEIN A"/>
    <property type="match status" value="1"/>
</dbReference>
<dbReference type="Pfam" id="PF01967">
    <property type="entry name" value="MoaC"/>
    <property type="match status" value="1"/>
</dbReference>
<dbReference type="SUPFAM" id="SSF55040">
    <property type="entry name" value="Molybdenum cofactor biosynthesis protein C, MoaC"/>
    <property type="match status" value="1"/>
</dbReference>
<proteinExistence type="inferred from homology"/>
<evidence type="ECO:0000255" key="1">
    <source>
        <dbReference type="HAMAP-Rule" id="MF_01224"/>
    </source>
</evidence>
<sequence length="163" mass="16879">MARLTHFDGDGQAHMVDVSGKAVTDRIAVADCYIKMTTQTLDLVEQGTAKKGDVLGVARLAGIMGAKKCADLIPLCHPLPITKVAVDLVPDASLPGVRITATVKTSGQTGVEMEALTAASTAALTVYDMLKAAEKTMEIGGLRVVLKDGGKSGRFEAPEGSAP</sequence>
<name>MOAC_JANSC</name>
<feature type="chain" id="PRO_1000054103" description="Cyclic pyranopterin monophosphate synthase">
    <location>
        <begin position="1"/>
        <end position="163"/>
    </location>
</feature>
<feature type="active site" evidence="1">
    <location>
        <position position="128"/>
    </location>
</feature>
<feature type="binding site" evidence="1">
    <location>
        <begin position="75"/>
        <end position="77"/>
    </location>
    <ligand>
        <name>substrate</name>
    </ligand>
</feature>
<feature type="binding site" evidence="1">
    <location>
        <begin position="113"/>
        <end position="114"/>
    </location>
    <ligand>
        <name>substrate</name>
    </ligand>
</feature>
<comment type="function">
    <text evidence="1">Catalyzes the conversion of (8S)-3',8-cyclo-7,8-dihydroguanosine 5'-triphosphate to cyclic pyranopterin monophosphate (cPMP).</text>
</comment>
<comment type="catalytic activity">
    <reaction evidence="1">
        <text>(8S)-3',8-cyclo-7,8-dihydroguanosine 5'-triphosphate = cyclic pyranopterin phosphate + diphosphate</text>
        <dbReference type="Rhea" id="RHEA:49580"/>
        <dbReference type="ChEBI" id="CHEBI:33019"/>
        <dbReference type="ChEBI" id="CHEBI:59648"/>
        <dbReference type="ChEBI" id="CHEBI:131766"/>
        <dbReference type="EC" id="4.6.1.17"/>
    </reaction>
</comment>
<comment type="pathway">
    <text evidence="1">Cofactor biosynthesis; molybdopterin biosynthesis.</text>
</comment>
<comment type="subunit">
    <text evidence="1">Homohexamer; trimer of dimers.</text>
</comment>
<comment type="similarity">
    <text evidence="1">Belongs to the MoaC family.</text>
</comment>
<gene>
    <name evidence="1" type="primary">moaC</name>
    <name type="ordered locus">Jann_1876</name>
</gene>
<organism>
    <name type="scientific">Jannaschia sp. (strain CCS1)</name>
    <dbReference type="NCBI Taxonomy" id="290400"/>
    <lineage>
        <taxon>Bacteria</taxon>
        <taxon>Pseudomonadati</taxon>
        <taxon>Pseudomonadota</taxon>
        <taxon>Alphaproteobacteria</taxon>
        <taxon>Rhodobacterales</taxon>
        <taxon>Roseobacteraceae</taxon>
        <taxon>Jannaschia</taxon>
    </lineage>
</organism>
<reference key="1">
    <citation type="submission" date="2006-02" db="EMBL/GenBank/DDBJ databases">
        <title>Complete sequence of chromosome of Jannaschia sp. CCS1.</title>
        <authorList>
            <consortium name="US DOE Joint Genome Institute"/>
            <person name="Copeland A."/>
            <person name="Lucas S."/>
            <person name="Lapidus A."/>
            <person name="Barry K."/>
            <person name="Detter J.C."/>
            <person name="Glavina del Rio T."/>
            <person name="Hammon N."/>
            <person name="Israni S."/>
            <person name="Pitluck S."/>
            <person name="Brettin T."/>
            <person name="Bruce D."/>
            <person name="Han C."/>
            <person name="Tapia R."/>
            <person name="Gilna P."/>
            <person name="Chertkov O."/>
            <person name="Saunders E."/>
            <person name="Schmutz J."/>
            <person name="Larimer F."/>
            <person name="Land M."/>
            <person name="Kyrpides N."/>
            <person name="Lykidis A."/>
            <person name="Moran M.A."/>
            <person name="Belas R."/>
            <person name="Ye W."/>
            <person name="Buchan A."/>
            <person name="Gonzalez J.M."/>
            <person name="Schell M.A."/>
            <person name="Richardson P."/>
        </authorList>
    </citation>
    <scope>NUCLEOTIDE SEQUENCE [LARGE SCALE GENOMIC DNA]</scope>
    <source>
        <strain>CCS1</strain>
    </source>
</reference>
<keyword id="KW-0456">Lyase</keyword>
<keyword id="KW-0501">Molybdenum cofactor biosynthesis</keyword>
<keyword id="KW-1185">Reference proteome</keyword>
<protein>
    <recommendedName>
        <fullName evidence="1">Cyclic pyranopterin monophosphate synthase</fullName>
        <ecNumber evidence="1">4.6.1.17</ecNumber>
    </recommendedName>
    <alternativeName>
        <fullName evidence="1">Molybdenum cofactor biosynthesis protein C</fullName>
    </alternativeName>
</protein>
<accession>Q28R69</accession>